<evidence type="ECO:0000255" key="1">
    <source>
        <dbReference type="HAMAP-Rule" id="MF_01057"/>
    </source>
</evidence>
<organism>
    <name type="scientific">Chloroflexus aurantiacus (strain ATCC 29366 / DSM 635 / J-10-fl)</name>
    <dbReference type="NCBI Taxonomy" id="324602"/>
    <lineage>
        <taxon>Bacteria</taxon>
        <taxon>Bacillati</taxon>
        <taxon>Chloroflexota</taxon>
        <taxon>Chloroflexia</taxon>
        <taxon>Chloroflexales</taxon>
        <taxon>Chloroflexineae</taxon>
        <taxon>Chloroflexaceae</taxon>
        <taxon>Chloroflexus</taxon>
    </lineage>
</organism>
<comment type="function">
    <text evidence="1">Catalyzes the formation of N(7)-methylguanine at position 46 (m7G46) in tRNA.</text>
</comment>
<comment type="catalytic activity">
    <reaction evidence="1">
        <text>guanosine(46) in tRNA + S-adenosyl-L-methionine = N(7)-methylguanosine(46) in tRNA + S-adenosyl-L-homocysteine</text>
        <dbReference type="Rhea" id="RHEA:42708"/>
        <dbReference type="Rhea" id="RHEA-COMP:10188"/>
        <dbReference type="Rhea" id="RHEA-COMP:10189"/>
        <dbReference type="ChEBI" id="CHEBI:57856"/>
        <dbReference type="ChEBI" id="CHEBI:59789"/>
        <dbReference type="ChEBI" id="CHEBI:74269"/>
        <dbReference type="ChEBI" id="CHEBI:74480"/>
        <dbReference type="EC" id="2.1.1.33"/>
    </reaction>
</comment>
<comment type="pathway">
    <text evidence="1">tRNA modification; N(7)-methylguanine-tRNA biosynthesis.</text>
</comment>
<comment type="similarity">
    <text evidence="1">Belongs to the class I-like SAM-binding methyltransferase superfamily. TrmB family.</text>
</comment>
<name>TRMB_CHLAA</name>
<gene>
    <name evidence="1" type="primary">trmB</name>
    <name type="ordered locus">Caur_3101</name>
</gene>
<accession>A9WHH4</accession>
<keyword id="KW-0489">Methyltransferase</keyword>
<keyword id="KW-1185">Reference proteome</keyword>
<keyword id="KW-0949">S-adenosyl-L-methionine</keyword>
<keyword id="KW-0808">Transferase</keyword>
<keyword id="KW-0819">tRNA processing</keyword>
<reference key="1">
    <citation type="journal article" date="2011" name="BMC Genomics">
        <title>Complete genome sequence of the filamentous anoxygenic phototrophic bacterium Chloroflexus aurantiacus.</title>
        <authorList>
            <person name="Tang K.H."/>
            <person name="Barry K."/>
            <person name="Chertkov O."/>
            <person name="Dalin E."/>
            <person name="Han C.S."/>
            <person name="Hauser L.J."/>
            <person name="Honchak B.M."/>
            <person name="Karbach L.E."/>
            <person name="Land M.L."/>
            <person name="Lapidus A."/>
            <person name="Larimer F.W."/>
            <person name="Mikhailova N."/>
            <person name="Pitluck S."/>
            <person name="Pierson B.K."/>
            <person name="Blankenship R.E."/>
        </authorList>
    </citation>
    <scope>NUCLEOTIDE SEQUENCE [LARGE SCALE GENOMIC DNA]</scope>
    <source>
        <strain>ATCC 29366 / DSM 635 / J-10-fl</strain>
    </source>
</reference>
<proteinExistence type="inferred from homology"/>
<protein>
    <recommendedName>
        <fullName evidence="1">tRNA (guanine-N(7)-)-methyltransferase</fullName>
        <ecNumber evidence="1">2.1.1.33</ecNumber>
    </recommendedName>
    <alternativeName>
        <fullName evidence="1">tRNA (guanine(46)-N(7))-methyltransferase</fullName>
    </alternativeName>
    <alternativeName>
        <fullName evidence="1">tRNA(m7G46)-methyltransferase</fullName>
    </alternativeName>
</protein>
<sequence>MGRGRYPARLYVTAPPPEIAARYYRSWPAKELYHTPEHFPPVSAEGLFGYNAPLTLEFGCATGEYLCALAAAQPSSCFVGIDIVAKPLYRAVERAVAGNLSNILFIHADARLIYQRIPTAALHSIILHFPPPLLRNRQRNQLLVSPQLLECAARTLVPGGYLSFLTDHPALFALMQELLPAFPALRATPASVEELAVFESHYHRRWAARGRTISGLRIERVMED</sequence>
<dbReference type="EC" id="2.1.1.33" evidence="1"/>
<dbReference type="EMBL" id="CP000909">
    <property type="protein sequence ID" value="ABY36300.1"/>
    <property type="molecule type" value="Genomic_DNA"/>
</dbReference>
<dbReference type="RefSeq" id="WP_012258953.1">
    <property type="nucleotide sequence ID" value="NC_010175.1"/>
</dbReference>
<dbReference type="RefSeq" id="YP_001636689.1">
    <property type="nucleotide sequence ID" value="NC_010175.1"/>
</dbReference>
<dbReference type="SMR" id="A9WHH4"/>
<dbReference type="FunCoup" id="A9WHH4">
    <property type="interactions" value="306"/>
</dbReference>
<dbReference type="STRING" id="324602.Caur_3101"/>
<dbReference type="EnsemblBacteria" id="ABY36300">
    <property type="protein sequence ID" value="ABY36300"/>
    <property type="gene ID" value="Caur_3101"/>
</dbReference>
<dbReference type="KEGG" id="cau:Caur_3101"/>
<dbReference type="PATRIC" id="fig|324602.8.peg.3505"/>
<dbReference type="eggNOG" id="COG0220">
    <property type="taxonomic scope" value="Bacteria"/>
</dbReference>
<dbReference type="HOGENOM" id="CLU_050910_2_0_0"/>
<dbReference type="InParanoid" id="A9WHH4"/>
<dbReference type="UniPathway" id="UPA00989"/>
<dbReference type="Proteomes" id="UP000002008">
    <property type="component" value="Chromosome"/>
</dbReference>
<dbReference type="GO" id="GO:0043527">
    <property type="term" value="C:tRNA methyltransferase complex"/>
    <property type="evidence" value="ECO:0000318"/>
    <property type="project" value="GO_Central"/>
</dbReference>
<dbReference type="GO" id="GO:0008176">
    <property type="term" value="F:tRNA (guanine(46)-N7)-methyltransferase activity"/>
    <property type="evidence" value="ECO:0000318"/>
    <property type="project" value="GO_Central"/>
</dbReference>
<dbReference type="GO" id="GO:0036265">
    <property type="term" value="P:RNA (guanine-N7)-methylation"/>
    <property type="evidence" value="ECO:0000318"/>
    <property type="project" value="GO_Central"/>
</dbReference>
<dbReference type="GO" id="GO:0030488">
    <property type="term" value="P:tRNA methylation"/>
    <property type="evidence" value="ECO:0000318"/>
    <property type="project" value="GO_Central"/>
</dbReference>
<dbReference type="CDD" id="cd02440">
    <property type="entry name" value="AdoMet_MTases"/>
    <property type="match status" value="1"/>
</dbReference>
<dbReference type="Gene3D" id="3.40.50.150">
    <property type="entry name" value="Vaccinia Virus protein VP39"/>
    <property type="match status" value="1"/>
</dbReference>
<dbReference type="HAMAP" id="MF_01057">
    <property type="entry name" value="tRNA_methyltr_TrmB"/>
    <property type="match status" value="1"/>
</dbReference>
<dbReference type="InterPro" id="IPR029063">
    <property type="entry name" value="SAM-dependent_MTases_sf"/>
</dbReference>
<dbReference type="InterPro" id="IPR003358">
    <property type="entry name" value="tRNA_(Gua-N-7)_MeTrfase_Trmb"/>
</dbReference>
<dbReference type="InterPro" id="IPR055361">
    <property type="entry name" value="tRNA_methyltr_TrmB_bact"/>
</dbReference>
<dbReference type="PANTHER" id="PTHR23417">
    <property type="entry name" value="3-DEOXY-D-MANNO-OCTULOSONIC-ACID TRANSFERASE/TRNA GUANINE-N 7 - -METHYLTRANSFERASE"/>
    <property type="match status" value="1"/>
</dbReference>
<dbReference type="PANTHER" id="PTHR23417:SF14">
    <property type="entry name" value="PENTACOTRIPEPTIDE-REPEAT REGION OF PRORP DOMAIN-CONTAINING PROTEIN"/>
    <property type="match status" value="1"/>
</dbReference>
<dbReference type="Pfam" id="PF02390">
    <property type="entry name" value="Methyltransf_4"/>
    <property type="match status" value="1"/>
</dbReference>
<dbReference type="SUPFAM" id="SSF53335">
    <property type="entry name" value="S-adenosyl-L-methionine-dependent methyltransferases"/>
    <property type="match status" value="1"/>
</dbReference>
<dbReference type="PROSITE" id="PS51625">
    <property type="entry name" value="SAM_MT_TRMB"/>
    <property type="match status" value="1"/>
</dbReference>
<feature type="chain" id="PRO_0000387942" description="tRNA (guanine-N(7)-)-methyltransferase">
    <location>
        <begin position="1"/>
        <end position="224"/>
    </location>
</feature>
<feature type="binding site" evidence="1">
    <location>
        <position position="57"/>
    </location>
    <ligand>
        <name>S-adenosyl-L-methionine</name>
        <dbReference type="ChEBI" id="CHEBI:59789"/>
    </ligand>
</feature>
<feature type="binding site" evidence="1">
    <location>
        <position position="82"/>
    </location>
    <ligand>
        <name>S-adenosyl-L-methionine</name>
        <dbReference type="ChEBI" id="CHEBI:59789"/>
    </ligand>
</feature>
<feature type="binding site" evidence="1">
    <location>
        <position position="109"/>
    </location>
    <ligand>
        <name>S-adenosyl-L-methionine</name>
        <dbReference type="ChEBI" id="CHEBI:59789"/>
    </ligand>
</feature>
<feature type="binding site" evidence="1">
    <location>
        <position position="167"/>
    </location>
    <ligand>
        <name>substrate</name>
    </ligand>
</feature>